<accession>Q9NYV8</accession>
<accession>Q645X3</accession>
<feature type="chain" id="PRO_0000082255" description="Taste receptor type 2 member 14">
    <location>
        <begin position="1"/>
        <end position="317"/>
    </location>
</feature>
<feature type="topological domain" description="Extracellular" evidence="4 5 7 8 9 10 11 12 13 14 15 16">
    <location>
        <begin position="1"/>
        <end position="7"/>
    </location>
</feature>
<feature type="transmembrane region" description="Helical; Name=1" evidence="4 5 7 8 9 10 11 12 13 14 15 16">
    <location>
        <begin position="8"/>
        <end position="28"/>
    </location>
</feature>
<feature type="topological domain" description="Cytoplasmic" evidence="4 5 7 8 9 10 11 12 13 14 15 16">
    <location>
        <begin position="29"/>
        <end position="55"/>
    </location>
</feature>
<feature type="transmembrane region" description="Helical; Name=2" evidence="4 5 7 8 9 10 11 12 13 14 15 16">
    <location>
        <begin position="56"/>
        <end position="76"/>
    </location>
</feature>
<feature type="topological domain" description="Extracellular" evidence="4 5 7 8 9 10 11 12 13 14 15 16">
    <location>
        <begin position="77"/>
        <end position="87"/>
    </location>
</feature>
<feature type="transmembrane region" description="Helical; Name=3" evidence="4 5 7 8 9 10 11 12 13 14 15 16">
    <location>
        <begin position="88"/>
        <end position="108"/>
    </location>
</feature>
<feature type="topological domain" description="Cytoplasmic" evidence="4 5 7 8 9 10 11 12 13 14 15 16">
    <location>
        <begin position="109"/>
        <end position="129"/>
    </location>
</feature>
<feature type="transmembrane region" description="Helical; Name=4" evidence="4 5 7 8 9 10 11 12 13 14 15 16">
    <location>
        <begin position="130"/>
        <end position="150"/>
    </location>
</feature>
<feature type="topological domain" description="Extracellular" evidence="4 5 7 8 9 10 11 12 13 14 15 16">
    <location>
        <begin position="151"/>
        <end position="184"/>
    </location>
</feature>
<feature type="transmembrane region" description="Helical; Name=5" evidence="4 5 7 8 9 10 11 12 13 14 15 16">
    <location>
        <begin position="185"/>
        <end position="205"/>
    </location>
</feature>
<feature type="topological domain" description="Cytoplasmic" evidence="4 5 7 8 9 10 11 12 13 14 15 16">
    <location>
        <begin position="206"/>
        <end position="232"/>
    </location>
</feature>
<feature type="transmembrane region" description="Helical; Name=6" evidence="4 5 7 8 9 10 11 12 13 14 15 16">
    <location>
        <begin position="233"/>
        <end position="253"/>
    </location>
</feature>
<feature type="topological domain" description="Extracellular" evidence="4 5 7 8 9 10 11 12 13 14 15 16">
    <location>
        <begin position="254"/>
        <end position="261"/>
    </location>
</feature>
<feature type="transmembrane region" description="Helical; Name=7" evidence="4 5 7 8 9 10 11 12 13 14 15 16">
    <location>
        <begin position="262"/>
        <end position="282"/>
    </location>
</feature>
<feature type="topological domain" description="Cytoplasmic" evidence="4 5 7 8 9 10 11 12 13 14 15 16">
    <location>
        <begin position="283"/>
        <end position="317"/>
    </location>
</feature>
<feature type="binding site" evidence="4 5 7 8 9 10 11 12 13 14 15 16">
    <location>
        <position position="86"/>
    </location>
    <ligand>
        <name>cholesterol</name>
        <dbReference type="ChEBI" id="CHEBI:16113"/>
    </ligand>
</feature>
<feature type="binding site" evidence="4 5 7 8 9 10 11 12 13 14 15 16">
    <location>
        <position position="89"/>
    </location>
    <ligand>
        <name>cholesterol</name>
        <dbReference type="ChEBI" id="CHEBI:16113"/>
    </ligand>
</feature>
<feature type="binding site" evidence="4 5 7 8 9 10 11 12 13 14 15 16">
    <location>
        <position position="180"/>
    </location>
    <ligand>
        <name>cholesterol</name>
        <dbReference type="ChEBI" id="CHEBI:16113"/>
    </ligand>
</feature>
<feature type="binding site" evidence="4 5 7 8 9 10 11 12 13 14 15 16">
    <location>
        <position position="265"/>
    </location>
    <ligand>
        <name>cholesterol</name>
        <dbReference type="ChEBI" id="CHEBI:16113"/>
    </ligand>
</feature>
<feature type="binding site" evidence="4 5 7 8 9 10 11 12 13 14 15 16">
    <location>
        <position position="268"/>
    </location>
    <ligand>
        <name>cholesterol</name>
        <dbReference type="ChEBI" id="CHEBI:16113"/>
    </ligand>
</feature>
<feature type="glycosylation site" description="N-linked (GlcNAc...) asparagine" evidence="2">
    <location>
        <position position="153"/>
    </location>
</feature>
<feature type="glycosylation site" description="N-linked (GlcNAc...) asparagine" evidence="1">
    <location>
        <position position="162"/>
    </location>
</feature>
<feature type="glycosylation site" description="N-linked (GlcNAc...) asparagine" evidence="1">
    <location>
        <position position="171"/>
    </location>
</feature>
<feature type="sequence variant" id="VAR_053347" description="In dbSNP:rs16925868.">
    <original>T</original>
    <variation>A</variation>
    <location>
        <position position="86"/>
    </location>
</feature>
<feature type="sequence variant" id="VAR_062085" description="In dbSNP:rs35804287.">
    <original>L</original>
    <variation>F</variation>
    <location>
        <position position="201"/>
    </location>
</feature>
<feature type="mutagenesis site" description="Abolishes calcium mobilization induced by aristolochic acid and flufenamic acid." evidence="5">
    <original>R</original>
    <variation>A</variation>
    <location>
        <position position="55"/>
    </location>
</feature>
<feature type="mutagenesis site" description="Impairs calcium mobilization induced by aristolochic acid and flufenamic acid. Impairs calcium mobilization; when associated with A-89. Impairs calcium mobilization; when associated with A-180. Abolishes calcium mobilization; when associated with A-89 and A-180." evidence="5">
    <original>S</original>
    <variation>A</variation>
    <location>
        <position position="65"/>
    </location>
</feature>
<feature type="mutagenesis site" description="Impairs calcium mobilization induced by aristolochic acid and flufenamic acid." evidence="5">
    <original>F</original>
    <variation>A</variation>
    <location>
        <position position="82"/>
    </location>
</feature>
<feature type="mutagenesis site" description="Abolishes basal activities of TAS2R14-GNAI1 and TAS2R14-GNAT3. Abolishes activation of TAS2R14-GNAT3 by flufenamic acid derivative cmpd28.1. Impairs calcium mobilization induced by aristolochic acid and flufenamic acid. Impairs calcium mobilization; when associated with A-65. Abolishes calcium mobilization; when associated with A-180. Abolishes calcium mobilization; when associated with A-65 and A-180." evidence="4 5">
    <original>W</original>
    <variation>A</variation>
    <location>
        <position position="89"/>
    </location>
</feature>
<feature type="mutagenesis site" description="Impairs calcium mobilization induced by aristolochic acid, flufenamic acid and flufenamic acid derivative cmpd28.1." evidence="5">
    <original>G</original>
    <variation>A</variation>
    <location>
        <position position="104"/>
    </location>
</feature>
<feature type="mutagenesis site" description="Attenuates activation of TAS2R14-GNAT3 and TAS2R14-GNAI1 by flufenamic acid derivative cmpd28.1. Abolishes calcium mobilization induced by aristolochic acid, flufenamic acid and flufenamic acid derivative cmpd28.1." evidence="4 5">
    <original>Y</original>
    <variation>A</variation>
    <location>
        <position position="107"/>
    </location>
</feature>
<feature type="mutagenesis site" description="Impairs calcium mobilization induced by aristolochic acid and flufenamic acid." evidence="5">
    <original>W</original>
    <variation>A</variation>
    <location>
        <position position="124"/>
    </location>
</feature>
<feature type="mutagenesis site" description="Impairs calcium mobilization induced by aristolochic acid and flufenamic acid. Impairs calcium mobilization; when associated with A-65. Abolishes calcium mobilization; when associated with A-89. Abolishes calcium mobilization; when associated with A-65 and A-89." evidence="5">
    <original>V</original>
    <variation>A</variation>
    <location>
        <position position="180"/>
    </location>
</feature>
<feature type="mutagenesis site" description="Attenuates activation of TAS2R14-GNAT3 and TAS2R14-GNAI1 by flufenamic acid derivative cmpd28.1. Impairs calcium mobilization induced by aristolochic acid, flufenamic acid and flufenamic acid derivative cmpd28.1." evidence="4 5">
    <original>S</original>
    <variation>A</variation>
    <location>
        <position position="194"/>
    </location>
</feature>
<feature type="mutagenesis site" description="Impairs calcium mobilization induced by aristolochic acid, flufenamic acid and flufenamic acid derivative cmpd28.1." evidence="5">
    <original>F</original>
    <variation>A</variation>
    <location>
        <position position="198"/>
    </location>
</feature>
<feature type="mutagenesis site" description="Impairs calcium mobilization induced by aristolochic acid and flufenamic acid. Impairs calcium mobilization; when associated with A-230." evidence="5">
    <original>M</original>
    <variation>A</variation>
    <variation>L</variation>
    <location>
        <position position="205"/>
    </location>
</feature>
<feature type="mutagenesis site" description="Impairs calcium mobilization induced by aristolochic acid and flufenamic acid." evidence="5">
    <original>H</original>
    <variation>A</variation>
    <location>
        <position position="208"/>
    </location>
</feature>
<feature type="mutagenesis site" description="Abolishes calcium mobilization induced by aristolochic acid. Impairs calcium mobilization induced by flufenamic acid and flufenamic acid derivative cmpd28.1." evidence="5">
    <original>G</original>
    <variation>A</variation>
    <variation>F</variation>
    <location>
        <position position="229"/>
    </location>
</feature>
<feature type="mutagenesis site" description="Impairs calcium mobilization induced by aristolochic acid and flufenamic acid. Impairs calcium mobilization; when associated with A-205 or L-205." evidence="5">
    <original>V</original>
    <variation>A</variation>
    <location>
        <position position="230"/>
    </location>
</feature>
<feature type="mutagenesis site" description="Impairs calcium mobilization induced by aristolochic acid, flufenamic acid and flufenamic acid derivative cmpd28.1." evidence="5">
    <original>V</original>
    <variation>A</variation>
    <variation>W</variation>
    <variation>F</variation>
    <location>
        <position position="233"/>
    </location>
</feature>
<feature type="mutagenesis site" description="Attenuates activation of TAS2R14-GNAT3 and TAS2R14-GNAI1 flufenamic acid derivative cmpd28.1." evidence="4">
    <original>F</original>
    <variation>A</variation>
    <location>
        <position position="236"/>
    </location>
</feature>
<feature type="mutagenesis site" description="Impairs calcium mobilization induced by aristolochic acid and flufenamic acid." evidence="5">
    <original>F</original>
    <variation>A</variation>
    <location>
        <position position="237"/>
    </location>
</feature>
<feature type="mutagenesis site" description="Attenuates activation of TAS2R14-GNAT3 and TAS2R14-GNAI1 by flufenamic acid derivative cmpd28.1. Abolishes calcium mobilization induced by aristolochic acid and flufenamic acid." evidence="4 5">
    <original>Y</original>
    <variation>A</variation>
    <location>
        <position position="240"/>
    </location>
</feature>
<feature type="mutagenesis site" description="Impairs calcium mobilization induced by aristolochic acid and flufenamic acid." evidence="5">
    <original>Q</original>
    <variation>A</variation>
    <location>
        <position position="266"/>
    </location>
</feature>
<feature type="mutagenesis site" description="Impairs calcium mobilization induced by aristolochic acid and flufenamic acid." evidence="5">
    <original>G</original>
    <variation>A</variation>
    <variation>I</variation>
    <location>
        <position position="269"/>
    </location>
</feature>
<feature type="mutagenesis site" description="Impairs calcium mobilization induced by aristolochic acid and flufenamic acid." evidence="5">
    <original>Y</original>
    <variation>A</variation>
    <location>
        <position position="272"/>
    </location>
</feature>
<feature type="mutagenesis site" description="Attenuates activation of TAS2R14-GNAT3 and TAS2R14-GNAI1 by flufenamic acid derivative cmpd28.1. Abolishes calcium mobilization induced by aristolochic acid, flufenamic acid and flufenamic acid derivative cmpd28.1." evidence="4 5">
    <original>H</original>
    <variation>A</variation>
    <location>
        <position position="276"/>
    </location>
</feature>
<feature type="helix" evidence="19">
    <location>
        <begin position="3"/>
        <end position="36"/>
    </location>
</feature>
<feature type="helix" evidence="19">
    <location>
        <begin position="43"/>
        <end position="70"/>
    </location>
</feature>
<feature type="helix" evidence="20">
    <location>
        <begin position="73"/>
        <end position="76"/>
    </location>
</feature>
<feature type="strand" evidence="17">
    <location>
        <begin position="78"/>
        <end position="80"/>
    </location>
</feature>
<feature type="helix" evidence="19">
    <location>
        <begin position="81"/>
        <end position="111"/>
    </location>
</feature>
<feature type="helix" evidence="19">
    <location>
        <begin position="117"/>
        <end position="123"/>
    </location>
</feature>
<feature type="helix" evidence="19">
    <location>
        <begin position="126"/>
        <end position="136"/>
    </location>
</feature>
<feature type="helix" evidence="19">
    <location>
        <begin position="138"/>
        <end position="161"/>
    </location>
</feature>
<feature type="helix" evidence="19">
    <location>
        <begin position="173"/>
        <end position="215"/>
    </location>
</feature>
<feature type="helix" evidence="18">
    <location>
        <begin position="223"/>
        <end position="225"/>
    </location>
</feature>
<feature type="helix" evidence="19">
    <location>
        <begin position="227"/>
        <end position="252"/>
    </location>
</feature>
<feature type="helix" evidence="18">
    <location>
        <begin position="256"/>
        <end position="258"/>
    </location>
</feature>
<feature type="helix" evidence="19">
    <location>
        <begin position="261"/>
        <end position="283"/>
    </location>
</feature>
<feature type="helix" evidence="19">
    <location>
        <begin position="285"/>
        <end position="298"/>
    </location>
</feature>
<proteinExistence type="evidence at protein level"/>
<sequence length="317" mass="36160">MGGVIKSIFTFVLIVEFIIGNLGNSFIALVNCIDWVKGRKISSVDRILTALAISRISLVWLIFGSWCVSVFFPALFATEKMFRMLTNIWTVINHFSVWLATGLGTFYFLKIANFSNSIFLYLKWRVKKVVLVLLLVTSVFLFLNIALINIHINASINGYRRNKTCSSDSSNFTRFSSLIVLTSTVFIFIPFTLSLAMFLLLIFSMWKHRKKMQHTVKISGDASTKAHRGVKSVITFFLLYAIFSLSFFISVWTSERLEENLIILSQVMGMAYPSCHSCVLILGNKKLRQASLSVLLWLRYMFKDGEPSGHKEFRESS</sequence>
<evidence type="ECO:0000255" key="1"/>
<evidence type="ECO:0000269" key="2">
    <source>
    </source>
</evidence>
<evidence type="ECO:0000269" key="3">
    <source>
    </source>
</evidence>
<evidence type="ECO:0000269" key="4">
    <source>
    </source>
</evidence>
<evidence type="ECO:0000269" key="5">
    <source>
    </source>
</evidence>
<evidence type="ECO:0000305" key="6"/>
<evidence type="ECO:0007744" key="7">
    <source>
        <dbReference type="PDB" id="8VY7"/>
    </source>
</evidence>
<evidence type="ECO:0007744" key="8">
    <source>
        <dbReference type="PDB" id="8VY9"/>
    </source>
</evidence>
<evidence type="ECO:0007744" key="9">
    <source>
        <dbReference type="PDB" id="8XQL"/>
    </source>
</evidence>
<evidence type="ECO:0007744" key="10">
    <source>
        <dbReference type="PDB" id="8XQN"/>
    </source>
</evidence>
<evidence type="ECO:0007744" key="11">
    <source>
        <dbReference type="PDB" id="8XQO"/>
    </source>
</evidence>
<evidence type="ECO:0007744" key="12">
    <source>
        <dbReference type="PDB" id="8XQP"/>
    </source>
</evidence>
<evidence type="ECO:0007744" key="13">
    <source>
        <dbReference type="PDB" id="8XQR"/>
    </source>
</evidence>
<evidence type="ECO:0007744" key="14">
    <source>
        <dbReference type="PDB" id="8XQS"/>
    </source>
</evidence>
<evidence type="ECO:0007744" key="15">
    <source>
        <dbReference type="PDB" id="8XQT"/>
    </source>
</evidence>
<evidence type="ECO:0007744" key="16">
    <source>
        <dbReference type="PDB" id="8YKY"/>
    </source>
</evidence>
<evidence type="ECO:0007829" key="17">
    <source>
        <dbReference type="PDB" id="8XQL"/>
    </source>
</evidence>
<evidence type="ECO:0007829" key="18">
    <source>
        <dbReference type="PDB" id="8XQN"/>
    </source>
</evidence>
<evidence type="ECO:0007829" key="19">
    <source>
        <dbReference type="PDB" id="8XQO"/>
    </source>
</evidence>
<evidence type="ECO:0007829" key="20">
    <source>
        <dbReference type="PDB" id="8XQT"/>
    </source>
</evidence>
<dbReference type="EMBL" id="AF227138">
    <property type="protein sequence ID" value="AAF43911.1"/>
    <property type="molecule type" value="Genomic_DNA"/>
</dbReference>
<dbReference type="EMBL" id="AY724944">
    <property type="protein sequence ID" value="AAU21146.1"/>
    <property type="molecule type" value="Genomic_DNA"/>
</dbReference>
<dbReference type="EMBL" id="BC069148">
    <property type="protein sequence ID" value="AAH69148.1"/>
    <property type="molecule type" value="mRNA"/>
</dbReference>
<dbReference type="EMBL" id="BC101993">
    <property type="protein sequence ID" value="AAI01994.1"/>
    <property type="molecule type" value="mRNA"/>
</dbReference>
<dbReference type="EMBL" id="BC101994">
    <property type="protein sequence ID" value="AAI01995.1"/>
    <property type="molecule type" value="mRNA"/>
</dbReference>
<dbReference type="EMBL" id="BC103699">
    <property type="protein sequence ID" value="AAI03700.1"/>
    <property type="molecule type" value="mRNA"/>
</dbReference>
<dbReference type="CCDS" id="CCDS8637.1"/>
<dbReference type="RefSeq" id="NP_076411.1">
    <property type="nucleotide sequence ID" value="NM_023922.2"/>
</dbReference>
<dbReference type="PDB" id="8RQL">
    <property type="method" value="EM"/>
    <property type="resolution" value="3.03 A"/>
    <property type="chains" value="R=1-317"/>
</dbReference>
<dbReference type="PDB" id="8VY7">
    <property type="method" value="EM"/>
    <property type="resolution" value="2.68 A"/>
    <property type="chains" value="R=1-309"/>
</dbReference>
<dbReference type="PDB" id="8VY9">
    <property type="method" value="EM"/>
    <property type="resolution" value="2.88 A"/>
    <property type="chains" value="R=1-317"/>
</dbReference>
<dbReference type="PDB" id="8XQL">
    <property type="method" value="EM"/>
    <property type="resolution" value="2.99 A"/>
    <property type="chains" value="R=2-317"/>
</dbReference>
<dbReference type="PDB" id="8XQN">
    <property type="method" value="EM"/>
    <property type="resolution" value="3.05 A"/>
    <property type="chains" value="R=2-317"/>
</dbReference>
<dbReference type="PDB" id="8XQO">
    <property type="method" value="EM"/>
    <property type="resolution" value="2.77 A"/>
    <property type="chains" value="R=2-317"/>
</dbReference>
<dbReference type="PDB" id="8XQP">
    <property type="method" value="EM"/>
    <property type="resolution" value="3.29 A"/>
    <property type="chains" value="R=2-317"/>
</dbReference>
<dbReference type="PDB" id="8XQR">
    <property type="method" value="EM"/>
    <property type="resolution" value="3.20 A"/>
    <property type="chains" value="R=2-317"/>
</dbReference>
<dbReference type="PDB" id="8XQS">
    <property type="method" value="EM"/>
    <property type="resolution" value="3.30 A"/>
    <property type="chains" value="R=2-317"/>
</dbReference>
<dbReference type="PDB" id="8XQT">
    <property type="method" value="EM"/>
    <property type="resolution" value="2.94 A"/>
    <property type="chains" value="R=2-317"/>
</dbReference>
<dbReference type="PDB" id="8YKY">
    <property type="method" value="EM"/>
    <property type="resolution" value="2.99 A"/>
    <property type="chains" value="R=2-317"/>
</dbReference>
<dbReference type="PDB" id="9IIW">
    <property type="method" value="EM"/>
    <property type="resolution" value="3.15 A"/>
    <property type="chains" value="R=1-317"/>
</dbReference>
<dbReference type="PDB" id="9IIX">
    <property type="method" value="EM"/>
    <property type="resolution" value="2.89 A"/>
    <property type="chains" value="R=1-317"/>
</dbReference>
<dbReference type="PDB" id="9IJ9">
    <property type="method" value="EM"/>
    <property type="resolution" value="2.70 A"/>
    <property type="chains" value="R=1-317"/>
</dbReference>
<dbReference type="PDB" id="9IJA">
    <property type="method" value="EM"/>
    <property type="resolution" value="3.05 A"/>
    <property type="chains" value="R=1-317"/>
</dbReference>
<dbReference type="PDBsum" id="8RQL"/>
<dbReference type="PDBsum" id="8VY7"/>
<dbReference type="PDBsum" id="8VY9"/>
<dbReference type="PDBsum" id="8XQL"/>
<dbReference type="PDBsum" id="8XQN"/>
<dbReference type="PDBsum" id="8XQO"/>
<dbReference type="PDBsum" id="8XQP"/>
<dbReference type="PDBsum" id="8XQR"/>
<dbReference type="PDBsum" id="8XQS"/>
<dbReference type="PDBsum" id="8XQT"/>
<dbReference type="PDBsum" id="8YKY"/>
<dbReference type="PDBsum" id="9IIW"/>
<dbReference type="PDBsum" id="9IIX"/>
<dbReference type="PDBsum" id="9IJ9"/>
<dbReference type="PDBsum" id="9IJA"/>
<dbReference type="EMDB" id="EMD-19445"/>
<dbReference type="EMDB" id="EMD-38580"/>
<dbReference type="EMDB" id="EMD-38582"/>
<dbReference type="EMDB" id="EMD-38583"/>
<dbReference type="EMDB" id="EMD-38584"/>
<dbReference type="EMDB" id="EMD-38586"/>
<dbReference type="EMDB" id="EMD-38587"/>
<dbReference type="EMDB" id="EMD-38588"/>
<dbReference type="EMDB" id="EMD-39376"/>
<dbReference type="EMDB" id="EMD-43647"/>
<dbReference type="EMDB" id="EMD-43650"/>
<dbReference type="EMDB" id="EMD-60607"/>
<dbReference type="EMDB" id="EMD-60608"/>
<dbReference type="EMDB" id="EMD-60626"/>
<dbReference type="EMDB" id="EMD-60627"/>
<dbReference type="SMR" id="Q9NYV8"/>
<dbReference type="BioGRID" id="119150">
    <property type="interactions" value="9"/>
</dbReference>
<dbReference type="FunCoup" id="Q9NYV8">
    <property type="interactions" value="466"/>
</dbReference>
<dbReference type="IntAct" id="Q9NYV8">
    <property type="interactions" value="4"/>
</dbReference>
<dbReference type="STRING" id="9606.ENSP00000441949"/>
<dbReference type="BindingDB" id="Q9NYV8"/>
<dbReference type="ChEMBL" id="CHEMBL3309105"/>
<dbReference type="DrugCentral" id="Q9NYV8"/>
<dbReference type="GuidetoPHARMACOLOGY" id="668"/>
<dbReference type="GlyCosmos" id="Q9NYV8">
    <property type="glycosylation" value="3 sites, No reported glycans"/>
</dbReference>
<dbReference type="GlyGen" id="Q9NYV8">
    <property type="glycosylation" value="3 sites"/>
</dbReference>
<dbReference type="iPTMnet" id="Q9NYV8"/>
<dbReference type="PhosphoSitePlus" id="Q9NYV8"/>
<dbReference type="BioMuta" id="TAS2R14"/>
<dbReference type="DMDM" id="29839658"/>
<dbReference type="PaxDb" id="9606-ENSP00000441949"/>
<dbReference type="PeptideAtlas" id="Q9NYV8"/>
<dbReference type="Antibodypedia" id="23413">
    <property type="antibodies" value="86 antibodies from 16 providers"/>
</dbReference>
<dbReference type="DNASU" id="50840"/>
<dbReference type="Ensembl" id="ENST00000537503.2">
    <property type="protein sequence ID" value="ENSP00000441949.1"/>
    <property type="gene ID" value="ENSG00000212127.6"/>
</dbReference>
<dbReference type="Ensembl" id="ENST00000575008.1">
    <property type="protein sequence ID" value="ENSP00000458544.1"/>
    <property type="gene ID" value="ENSG00000261984.1"/>
</dbReference>
<dbReference type="Ensembl" id="ENST00000614274.2">
    <property type="protein sequence ID" value="ENSP00000484251.1"/>
    <property type="gene ID" value="ENSG00000276541.2"/>
</dbReference>
<dbReference type="GeneID" id="50840"/>
<dbReference type="KEGG" id="hsa:50840"/>
<dbReference type="MANE-Select" id="ENST00000537503.2">
    <property type="protein sequence ID" value="ENSP00000441949.1"/>
    <property type="RefSeq nucleotide sequence ID" value="NM_023922.2"/>
    <property type="RefSeq protein sequence ID" value="NP_076411.1"/>
</dbReference>
<dbReference type="UCSC" id="uc010shi.3">
    <property type="organism name" value="human"/>
</dbReference>
<dbReference type="AGR" id="HGNC:14920"/>
<dbReference type="CTD" id="50840"/>
<dbReference type="DisGeNET" id="50840"/>
<dbReference type="GeneCards" id="TAS2R14"/>
<dbReference type="HGNC" id="HGNC:14920">
    <property type="gene designation" value="TAS2R14"/>
</dbReference>
<dbReference type="HPA" id="ENSG00000212127">
    <property type="expression patterns" value="Low tissue specificity"/>
</dbReference>
<dbReference type="MIM" id="604790">
    <property type="type" value="gene"/>
</dbReference>
<dbReference type="neXtProt" id="NX_Q9NYV8"/>
<dbReference type="OpenTargets" id="ENSG00000212127"/>
<dbReference type="PharmGKB" id="PA37930"/>
<dbReference type="VEuPathDB" id="HostDB:ENSG00000212127"/>
<dbReference type="eggNOG" id="ENOG502SKRK">
    <property type="taxonomic scope" value="Eukaryota"/>
</dbReference>
<dbReference type="GeneTree" id="ENSGT01100000263477"/>
<dbReference type="HOGENOM" id="CLU_072337_2_0_1"/>
<dbReference type="InParanoid" id="Q9NYV8"/>
<dbReference type="OMA" id="WLIFGSW"/>
<dbReference type="OrthoDB" id="8876749at2759"/>
<dbReference type="PAN-GO" id="Q9NYV8">
    <property type="GO annotations" value="3 GO annotations based on evolutionary models"/>
</dbReference>
<dbReference type="PhylomeDB" id="Q9NYV8"/>
<dbReference type="TreeFam" id="TF335891"/>
<dbReference type="PathwayCommons" id="Q9NYV8"/>
<dbReference type="Reactome" id="R-HSA-418594">
    <property type="pathway name" value="G alpha (i) signalling events"/>
</dbReference>
<dbReference type="Reactome" id="R-HSA-420499">
    <property type="pathway name" value="Class C/3 (Metabotropic glutamate/pheromone receptors)"/>
</dbReference>
<dbReference type="Reactome" id="R-HSA-9717207">
    <property type="pathway name" value="Sensory perception of sweet, bitter, and umami (glutamate) taste"/>
</dbReference>
<dbReference type="BioGRID-ORCS" id="50840">
    <property type="hits" value="16 hits in 1147 CRISPR screens"/>
</dbReference>
<dbReference type="GeneWiki" id="TAS2R14"/>
<dbReference type="GenomeRNAi" id="50840"/>
<dbReference type="Pharos" id="Q9NYV8">
    <property type="development level" value="Tchem"/>
</dbReference>
<dbReference type="PRO" id="PR:Q9NYV8"/>
<dbReference type="Proteomes" id="UP000005640">
    <property type="component" value="Chromosome 12"/>
</dbReference>
<dbReference type="RNAct" id="Q9NYV8">
    <property type="molecule type" value="protein"/>
</dbReference>
<dbReference type="Bgee" id="ENSG00000212127">
    <property type="expression patterns" value="Expressed in male germ line stem cell (sensu Vertebrata) in testis and 97 other cell types or tissues"/>
</dbReference>
<dbReference type="GO" id="GO:0016020">
    <property type="term" value="C:membrane"/>
    <property type="evidence" value="ECO:0000318"/>
    <property type="project" value="GO_Central"/>
</dbReference>
<dbReference type="GO" id="GO:0005886">
    <property type="term" value="C:plasma membrane"/>
    <property type="evidence" value="ECO:0000304"/>
    <property type="project" value="Reactome"/>
</dbReference>
<dbReference type="GO" id="GO:0033038">
    <property type="term" value="F:bitter taste receptor activity"/>
    <property type="evidence" value="ECO:0000314"/>
    <property type="project" value="UniProtKB"/>
</dbReference>
<dbReference type="GO" id="GO:0004930">
    <property type="term" value="F:G protein-coupled receptor activity"/>
    <property type="evidence" value="ECO:0007669"/>
    <property type="project" value="UniProtKB-KW"/>
</dbReference>
<dbReference type="GO" id="GO:0008527">
    <property type="term" value="F:taste receptor activity"/>
    <property type="evidence" value="ECO:0000314"/>
    <property type="project" value="HGNC-UCL"/>
</dbReference>
<dbReference type="GO" id="GO:0001580">
    <property type="term" value="P:detection of chemical stimulus involved in sensory perception of bitter taste"/>
    <property type="evidence" value="ECO:0000314"/>
    <property type="project" value="UniProtKB"/>
</dbReference>
<dbReference type="GO" id="GO:0007186">
    <property type="term" value="P:G protein-coupled receptor signaling pathway"/>
    <property type="evidence" value="ECO:0000305"/>
    <property type="project" value="HGNC-UCL"/>
</dbReference>
<dbReference type="CDD" id="cd15019">
    <property type="entry name" value="7tm_TAS2R14-like"/>
    <property type="match status" value="1"/>
</dbReference>
<dbReference type="FunFam" id="1.20.1070.10:FF:000042">
    <property type="entry name" value="Taste receptor type 2 member 7"/>
    <property type="match status" value="1"/>
</dbReference>
<dbReference type="Gene3D" id="1.20.1070.10">
    <property type="entry name" value="Rhodopsin 7-helix transmembrane proteins"/>
    <property type="match status" value="1"/>
</dbReference>
<dbReference type="InterPro" id="IPR007960">
    <property type="entry name" value="TAS2R"/>
</dbReference>
<dbReference type="PANTHER" id="PTHR11394">
    <property type="entry name" value="TASTE RECEPTOR TYPE 2"/>
    <property type="match status" value="1"/>
</dbReference>
<dbReference type="PANTHER" id="PTHR11394:SF23">
    <property type="entry name" value="TASTE RECEPTOR TYPE 2 MEMBER 14"/>
    <property type="match status" value="1"/>
</dbReference>
<dbReference type="Pfam" id="PF05296">
    <property type="entry name" value="TAS2R"/>
    <property type="match status" value="1"/>
</dbReference>
<dbReference type="SUPFAM" id="SSF81321">
    <property type="entry name" value="Family A G protein-coupled receptor-like"/>
    <property type="match status" value="1"/>
</dbReference>
<gene>
    <name type="primary">TAS2R14</name>
</gene>
<organism>
    <name type="scientific">Homo sapiens</name>
    <name type="common">Human</name>
    <dbReference type="NCBI Taxonomy" id="9606"/>
    <lineage>
        <taxon>Eukaryota</taxon>
        <taxon>Metazoa</taxon>
        <taxon>Chordata</taxon>
        <taxon>Craniata</taxon>
        <taxon>Vertebrata</taxon>
        <taxon>Euteleostomi</taxon>
        <taxon>Mammalia</taxon>
        <taxon>Eutheria</taxon>
        <taxon>Euarchontoglires</taxon>
        <taxon>Primates</taxon>
        <taxon>Haplorrhini</taxon>
        <taxon>Catarrhini</taxon>
        <taxon>Hominidae</taxon>
        <taxon>Homo</taxon>
    </lineage>
</organism>
<protein>
    <recommendedName>
        <fullName>Taste receptor type 2 member 14</fullName>
        <shortName>T2R14</shortName>
    </recommendedName>
    <alternativeName>
        <fullName>Taste receptor family B member 1</fullName>
        <shortName>TRB1</shortName>
    </alternativeName>
</protein>
<reference key="1">
    <citation type="journal article" date="2000" name="Cell">
        <title>A novel family of mammalian taste receptors.</title>
        <authorList>
            <person name="Adler E."/>
            <person name="Hoon M.A."/>
            <person name="Mueller K.L."/>
            <person name="Chandrashekar J."/>
            <person name="Ryba N.J.P."/>
            <person name="Zuker C.S."/>
        </authorList>
    </citation>
    <scope>NUCLEOTIDE SEQUENCE [GENOMIC DNA]</scope>
    <scope>TOPOLOGY</scope>
</reference>
<reference key="2">
    <citation type="journal article" date="2005" name="Mol. Biol. Evol.">
        <title>Evolution of bitter taste receptors in humans and apes.</title>
        <authorList>
            <person name="Fischer A."/>
            <person name="Gilad Y."/>
            <person name="Man O."/>
            <person name="Paeaebo S."/>
        </authorList>
    </citation>
    <scope>NUCLEOTIDE SEQUENCE [GENOMIC DNA]</scope>
</reference>
<reference key="3">
    <citation type="journal article" date="2004" name="Genome Res.">
        <title>The status, quality, and expansion of the NIH full-length cDNA project: the Mammalian Gene Collection (MGC).</title>
        <authorList>
            <consortium name="The MGC Project Team"/>
        </authorList>
    </citation>
    <scope>NUCLEOTIDE SEQUENCE [LARGE SCALE MRNA]</scope>
</reference>
<reference key="4">
    <citation type="journal article" date="2000" name="Cell">
        <title>T2Rs function as bitter taste receptors.</title>
        <authorList>
            <person name="Chandrashekar J."/>
            <person name="Mueller K.L."/>
            <person name="Hoon M.A."/>
            <person name="Adler E."/>
            <person name="Feng L."/>
            <person name="Guo W."/>
            <person name="Zuker C.S."/>
            <person name="Ryba N.J.P."/>
        </authorList>
    </citation>
    <scope>CHARACTERIZATION</scope>
</reference>
<reference key="5">
    <citation type="journal article" date="2002" name="Curr. Opin. Neurobiol.">
        <title>Receptors for bitter and sweet taste.</title>
        <authorList>
            <person name="Montmayeur J.-P."/>
            <person name="Matsunami H."/>
        </authorList>
    </citation>
    <scope>REVIEW</scope>
</reference>
<reference key="6">
    <citation type="journal article" date="2002" name="J. Biol. Chem.">
        <title>Molecular mechanisms of bitter and sweet taste transduction.</title>
        <authorList>
            <person name="Margolskee R.F."/>
        </authorList>
    </citation>
    <scope>REVIEW</scope>
</reference>
<reference key="7">
    <citation type="journal article" date="2003" name="Cell">
        <title>Coding of sweet, bitter, and umami tastes: different receptor cells sharing similar signaling pathways.</title>
        <authorList>
            <person name="Zhang Y."/>
            <person name="Hoon M.A."/>
            <person name="Chandrashekar J."/>
            <person name="Mueller K.L."/>
            <person name="Cook B."/>
            <person name="Wu D."/>
            <person name="Zuker C.S."/>
            <person name="Ryba N.J."/>
        </authorList>
    </citation>
    <scope>REVIEW</scope>
</reference>
<reference key="8">
    <citation type="journal article" date="2005" name="J. Proteome Res.">
        <title>Human plasma N-glycoproteome analysis by immunoaffinity subtraction, hydrazide chemistry, and mass spectrometry.</title>
        <authorList>
            <person name="Liu T."/>
            <person name="Qian W.-J."/>
            <person name="Gritsenko M.A."/>
            <person name="Camp D.G. II"/>
            <person name="Monroe M.E."/>
            <person name="Moore R.J."/>
            <person name="Smith R.D."/>
        </authorList>
    </citation>
    <scope>GLYCOSYLATION [LARGE SCALE ANALYSIS] AT ASN-153</scope>
    <source>
        <tissue>Plasma</tissue>
    </source>
</reference>
<reference key="9">
    <citation type="journal article" date="2006" name="J. Biol. Chem.">
        <title>Members of RTP and REEP gene families influence functional bitter taste receptor expression.</title>
        <authorList>
            <person name="Behrens M."/>
            <person name="Bartelt J."/>
            <person name="Reichling C."/>
            <person name="Winnig M."/>
            <person name="Kuhn C."/>
            <person name="Meyerhof W."/>
        </authorList>
    </citation>
    <scope>TISSUE SPECIFICITY</scope>
</reference>
<reference evidence="7 8" key="10">
    <citation type="journal article" date="2024" name="Nature">
        <title>Bitter taste receptor activation by cholesterol and an intracellular tastant.</title>
        <authorList>
            <person name="Kim Y."/>
            <person name="Gumpper R.H."/>
            <person name="Liu Y."/>
            <person name="Kocak D.D."/>
            <person name="Xiong Y."/>
            <person name="Cao C."/>
            <person name="Deng Z."/>
            <person name="Krumm B.E."/>
            <person name="Jain M.K."/>
            <person name="Zhang S."/>
            <person name="Jin J."/>
            <person name="Roth B.L."/>
        </authorList>
    </citation>
    <scope>STRUCTURE BY ELECTRON MICROSCOPY (2.68 ANGSTROMS) IN COMPLEXES WITH G-PROTEINS; CHOLESTEROL AND AGONIST CMPD28.1</scope>
    <scope>FUNCTION</scope>
    <scope>TRANSPORTER ACTIVITY</scope>
    <scope>ACTIVITY REGULATION</scope>
    <scope>SUBUNIT</scope>
    <scope>SUBCELLULAR LOCATION</scope>
    <scope>TISSUE SPECIFICITY</scope>
    <scope>TOPOLOGY</scope>
    <scope>MUTAGENESIS OF TRP-89; TYR-107; SER-194; PHE-236; TYR-240 AND HIS-276</scope>
</reference>
<reference evidence="9 10 11 12 13 14 15 16" key="11">
    <citation type="journal article" date="2024" name="Nature">
        <title>Bitter taste TAS2R14 activation by intracellular tastants and cholesterol.</title>
        <authorList>
            <person name="Hu X."/>
            <person name="Ao W."/>
            <person name="Gao M."/>
            <person name="Wu L."/>
            <person name="Pei Y."/>
            <person name="Liu S."/>
            <person name="Wu Y."/>
            <person name="Zhao F."/>
            <person name="Sun Q."/>
            <person name="Liu J."/>
            <person name="Jiang L."/>
            <person name="Wang X."/>
            <person name="Li Y."/>
            <person name="Tan Q."/>
            <person name="Cheng J."/>
            <person name="Yang F."/>
            <person name="Yang C."/>
            <person name="Sun J."/>
            <person name="Hua T."/>
            <person name="Liu Z.J."/>
        </authorList>
    </citation>
    <scope>STRUCTURE BY ELECTRON MICROSCOPY (2.77 ANGSTROMS) OF 2-317 IN COMPLEXES WITH G-PROTEINS; ARISTOLOCHIC ACID; FLUFENAMIC ACID AND AGONIST CMPD28.1</scope>
    <scope>FUNCTION</scope>
    <scope>TRANSPORTER ACTIVITY</scope>
    <scope>ACTIVITY REGULATION</scope>
    <scope>SUBUNIT</scope>
    <scope>SUBCELLULAR LOCATION</scope>
    <scope>TISSUE SPECIFICITY</scope>
    <scope>TOPOLOGY</scope>
    <scope>MUTAGENESIS OF ARG-55; SER-65; PHE-82; TRP-89; GLY-104; TYR-107; TRP-124; VAL-180; SER-194; PHE-198; MET-205; HIS-208; GLY-229; VAL-230; VAL-233; PHE-237; TYR-240; GLN-266; GLY-269; TYR-272 AND HIS-276</scope>
</reference>
<name>T2R14_HUMAN</name>
<keyword id="KW-0002">3D-structure</keyword>
<keyword id="KW-0297">G-protein coupled receptor</keyword>
<keyword id="KW-0325">Glycoprotein</keyword>
<keyword id="KW-0472">Membrane</keyword>
<keyword id="KW-0675">Receptor</keyword>
<keyword id="KW-1185">Reference proteome</keyword>
<keyword id="KW-0716">Sensory transduction</keyword>
<keyword id="KW-0919">Taste</keyword>
<keyword id="KW-0807">Transducer</keyword>
<keyword id="KW-0812">Transmembrane</keyword>
<keyword id="KW-1133">Transmembrane helix</keyword>
<comment type="function">
    <text evidence="4 5">Gustducin-linked G-protein coupled receptor that plays a role in the perception of bitterness (PubMed:38600377, PubMed:38776963). The activity of this receptor stimulates GNAT3, activating the gustducin G-protein pathway (PubMed:38600377, PubMed:38776963). Likely plays a role in sensing the chemical composition of the gastrointestinal content and other extra-oral tissues via the inhibitory G-protein pathways (PubMed:38600377, PubMed:38776963).</text>
</comment>
<comment type="catalytic activity">
    <reaction evidence="5">
        <text>Ca(2+)(in) = Ca(2+)(out)</text>
        <dbReference type="Rhea" id="RHEA:29671"/>
        <dbReference type="ChEBI" id="CHEBI:29108"/>
    </reaction>
</comment>
<comment type="catalytic activity">
    <reaction evidence="4">
        <text>3',5'-cyclic AMP(in) = 3',5'-cyclic AMP(out)</text>
        <dbReference type="Rhea" id="RHEA:76223"/>
        <dbReference type="ChEBI" id="CHEBI:58165"/>
    </reaction>
</comment>
<comment type="activity regulation">
    <text evidence="4 5">Basal activity is enhanced by binding to bitter tastants, such as flufenamic acid and aristolochic acid (PubMed:38600377, PubMed:38776963). Regulated by cholesterol in a concentration-dependent manner (PubMed:38600377, PubMed:38776963).</text>
</comment>
<comment type="subunit">
    <text evidence="4 5">Core component of the TAS2R14-GNAI1 complex, consisting of TAS2R14, GNAI1, GNB1 and GNG2; within the complex interacts with GNAI1 (PubMed:38600377, PubMed:38776963). Core component of the TAS2R14-GNAT3 complex, consisting of TAS2R14, GNAT3, GNB1 and GNG2; within the complex interacts with GNAT3 (PubMed:38600377, PubMed:38776963). Core component of the TAS2R14-GNAS2 complex, consisting of TAS2R14, GNAS2, GNB1 and GNG2; within the complex interacts with GNAS2 (PubMed:38776963).</text>
</comment>
<comment type="subcellular location">
    <subcellularLocation>
        <location>Membrane</location>
        <topology evidence="4 5">Multi-pass membrane protein</topology>
    </subcellularLocation>
</comment>
<comment type="tissue specificity">
    <text evidence="3 4">Highly expressed in cerebellum, pancreas, small intestine and thymus; also expressed in adipose, aorta, skin and tongue, but at significantly lower levels (PubMed:38600377). Expressed in subsets of taste receptor cells of the tongue and palate epithelium and exclusively in gustducin-positive cells. Expressed in testis (PubMed:16720576).</text>
</comment>
<comment type="miscellaneous">
    <text>Most taste cells may be activated by a limited number of bitter compounds; individual taste cells can discriminate among bitter stimuli.</text>
</comment>
<comment type="similarity">
    <text evidence="6">Belongs to the G-protein coupled receptor T2R family.</text>
</comment>